<dbReference type="EC" id="7.-.-.-" evidence="1"/>
<dbReference type="EMBL" id="AE001437">
    <property type="protein sequence ID" value="AAK81041.1"/>
    <property type="molecule type" value="Genomic_DNA"/>
</dbReference>
<dbReference type="PIR" id="F97281">
    <property type="entry name" value="F97281"/>
</dbReference>
<dbReference type="RefSeq" id="NP_349701.1">
    <property type="nucleotide sequence ID" value="NC_003030.1"/>
</dbReference>
<dbReference type="RefSeq" id="WP_010966382.1">
    <property type="nucleotide sequence ID" value="NC_003030.1"/>
</dbReference>
<dbReference type="SMR" id="Q97EK9"/>
<dbReference type="STRING" id="272562.CA_C3101"/>
<dbReference type="KEGG" id="cac:CA_C3101"/>
<dbReference type="PATRIC" id="fig|272562.8.peg.3284"/>
<dbReference type="eggNOG" id="COG1122">
    <property type="taxonomic scope" value="Bacteria"/>
</dbReference>
<dbReference type="HOGENOM" id="CLU_000604_1_22_9"/>
<dbReference type="OrthoDB" id="9784332at2"/>
<dbReference type="Proteomes" id="UP000000814">
    <property type="component" value="Chromosome"/>
</dbReference>
<dbReference type="GO" id="GO:0043190">
    <property type="term" value="C:ATP-binding cassette (ABC) transporter complex"/>
    <property type="evidence" value="ECO:0007669"/>
    <property type="project" value="TreeGrafter"/>
</dbReference>
<dbReference type="GO" id="GO:0005524">
    <property type="term" value="F:ATP binding"/>
    <property type="evidence" value="ECO:0007669"/>
    <property type="project" value="UniProtKB-KW"/>
</dbReference>
<dbReference type="GO" id="GO:0016887">
    <property type="term" value="F:ATP hydrolysis activity"/>
    <property type="evidence" value="ECO:0007669"/>
    <property type="project" value="InterPro"/>
</dbReference>
<dbReference type="GO" id="GO:0042626">
    <property type="term" value="F:ATPase-coupled transmembrane transporter activity"/>
    <property type="evidence" value="ECO:0007669"/>
    <property type="project" value="TreeGrafter"/>
</dbReference>
<dbReference type="CDD" id="cd03225">
    <property type="entry name" value="ABC_cobalt_CbiO_domain1"/>
    <property type="match status" value="1"/>
</dbReference>
<dbReference type="FunFam" id="3.40.50.300:FF:000224">
    <property type="entry name" value="Energy-coupling factor transporter ATP-binding protein EcfA"/>
    <property type="match status" value="1"/>
</dbReference>
<dbReference type="Gene3D" id="3.40.50.300">
    <property type="entry name" value="P-loop containing nucleotide triphosphate hydrolases"/>
    <property type="match status" value="1"/>
</dbReference>
<dbReference type="InterPro" id="IPR003593">
    <property type="entry name" value="AAA+_ATPase"/>
</dbReference>
<dbReference type="InterPro" id="IPR003439">
    <property type="entry name" value="ABC_transporter-like_ATP-bd"/>
</dbReference>
<dbReference type="InterPro" id="IPR017871">
    <property type="entry name" value="ABC_transporter-like_CS"/>
</dbReference>
<dbReference type="InterPro" id="IPR015856">
    <property type="entry name" value="ABC_transpr_CbiO/EcfA_su"/>
</dbReference>
<dbReference type="InterPro" id="IPR050095">
    <property type="entry name" value="ECF_ABC_transporter_ATP-bd"/>
</dbReference>
<dbReference type="InterPro" id="IPR030946">
    <property type="entry name" value="EcfA2"/>
</dbReference>
<dbReference type="InterPro" id="IPR027417">
    <property type="entry name" value="P-loop_NTPase"/>
</dbReference>
<dbReference type="NCBIfam" id="TIGR04521">
    <property type="entry name" value="ECF_ATPase_2"/>
    <property type="match status" value="1"/>
</dbReference>
<dbReference type="NCBIfam" id="NF010158">
    <property type="entry name" value="PRK13637.1"/>
    <property type="match status" value="1"/>
</dbReference>
<dbReference type="PANTHER" id="PTHR43553:SF27">
    <property type="entry name" value="ENERGY-COUPLING FACTOR TRANSPORTER ATP-BINDING PROTEIN ECFA2"/>
    <property type="match status" value="1"/>
</dbReference>
<dbReference type="PANTHER" id="PTHR43553">
    <property type="entry name" value="HEAVY METAL TRANSPORTER"/>
    <property type="match status" value="1"/>
</dbReference>
<dbReference type="Pfam" id="PF00005">
    <property type="entry name" value="ABC_tran"/>
    <property type="match status" value="1"/>
</dbReference>
<dbReference type="SMART" id="SM00382">
    <property type="entry name" value="AAA"/>
    <property type="match status" value="1"/>
</dbReference>
<dbReference type="SUPFAM" id="SSF52540">
    <property type="entry name" value="P-loop containing nucleoside triphosphate hydrolases"/>
    <property type="match status" value="1"/>
</dbReference>
<dbReference type="PROSITE" id="PS00211">
    <property type="entry name" value="ABC_TRANSPORTER_1"/>
    <property type="match status" value="1"/>
</dbReference>
<dbReference type="PROSITE" id="PS50893">
    <property type="entry name" value="ABC_TRANSPORTER_2"/>
    <property type="match status" value="1"/>
</dbReference>
<dbReference type="PROSITE" id="PS51246">
    <property type="entry name" value="CBIO"/>
    <property type="match status" value="1"/>
</dbReference>
<name>ECFA2_CLOAB</name>
<comment type="function">
    <text evidence="1">ATP-binding (A) component of a common energy-coupling factor (ECF) ABC-transporter complex. Unlike classic ABC transporters this ECF transporter provides the energy necessary to transport a number of different substrates.</text>
</comment>
<comment type="subunit">
    <text evidence="1">Forms a stable energy-coupling factor (ECF) transporter complex composed of 2 membrane-embedded substrate-binding proteins (S component), 2 ATP-binding proteins (A component) and 2 transmembrane proteins (T component).</text>
</comment>
<comment type="subcellular location">
    <subcellularLocation>
        <location evidence="1">Cell membrane</location>
        <topology evidence="1">Peripheral membrane protein</topology>
    </subcellularLocation>
</comment>
<comment type="similarity">
    <text evidence="1">Belongs to the ABC transporter superfamily. Energy-coupling factor EcfA family.</text>
</comment>
<evidence type="ECO:0000255" key="1">
    <source>
        <dbReference type="HAMAP-Rule" id="MF_01710"/>
    </source>
</evidence>
<organism>
    <name type="scientific">Clostridium acetobutylicum (strain ATCC 824 / DSM 792 / JCM 1419 / IAM 19013 / LMG 5710 / NBRC 13948 / NRRL B-527 / VKM B-1787 / 2291 / W)</name>
    <dbReference type="NCBI Taxonomy" id="272562"/>
    <lineage>
        <taxon>Bacteria</taxon>
        <taxon>Bacillati</taxon>
        <taxon>Bacillota</taxon>
        <taxon>Clostridia</taxon>
        <taxon>Eubacteriales</taxon>
        <taxon>Clostridiaceae</taxon>
        <taxon>Clostridium</taxon>
    </lineage>
</organism>
<keyword id="KW-0067">ATP-binding</keyword>
<keyword id="KW-1003">Cell membrane</keyword>
<keyword id="KW-0472">Membrane</keyword>
<keyword id="KW-0547">Nucleotide-binding</keyword>
<keyword id="KW-1185">Reference proteome</keyword>
<keyword id="KW-1278">Translocase</keyword>
<keyword id="KW-0813">Transport</keyword>
<gene>
    <name evidence="1" type="primary">ecfA2</name>
    <name type="synonym">cbiO2</name>
    <name type="ordered locus">CA_C3101</name>
</gene>
<feature type="chain" id="PRO_0000091994" description="Energy-coupling factor transporter ATP-binding protein EcfA2">
    <location>
        <begin position="1"/>
        <end position="286"/>
    </location>
</feature>
<feature type="domain" description="ABC transporter" evidence="1">
    <location>
        <begin position="3"/>
        <end position="245"/>
    </location>
</feature>
<feature type="binding site" evidence="1">
    <location>
        <begin position="40"/>
        <end position="47"/>
    </location>
    <ligand>
        <name>ATP</name>
        <dbReference type="ChEBI" id="CHEBI:30616"/>
    </ligand>
</feature>
<proteinExistence type="inferred from homology"/>
<protein>
    <recommendedName>
        <fullName evidence="1">Energy-coupling factor transporter ATP-binding protein EcfA2</fullName>
        <shortName evidence="1">ECF transporter A component EcfA2</shortName>
        <ecNumber evidence="1">7.-.-.-</ecNumber>
    </recommendedName>
</protein>
<accession>Q97EK9</accession>
<sequence length="286" mass="32239">MPIKIENLTYTYMPGTPFEKKALDNVNITIEDGEFAVFIGHTGSGKSTLIQQINGLLKPTSGSIFIDDVDITDKSVKLNDIRKKVGLVFQYPEYQLFEETIEKDIAFGPRNMGLSEEEVSTRVKKAMKMVGLEYNDFKDKSPFELSGGQKRRVAIAGVVAMEPKVLILDEPTAGLDPKGRDDILYEIKKLQKEYKMTIILVSHSMEDVAKVADKIFVMYDSRCILSGNLDEVFNEIDTLEKVGLAVPKVTYLVRKLREKGFDISKDIFTIEAAKKEILRVLESAKR</sequence>
<reference key="1">
    <citation type="journal article" date="2001" name="J. Bacteriol.">
        <title>Genome sequence and comparative analysis of the solvent-producing bacterium Clostridium acetobutylicum.</title>
        <authorList>
            <person name="Noelling J."/>
            <person name="Breton G."/>
            <person name="Omelchenko M.V."/>
            <person name="Makarova K.S."/>
            <person name="Zeng Q."/>
            <person name="Gibson R."/>
            <person name="Lee H.M."/>
            <person name="Dubois J."/>
            <person name="Qiu D."/>
            <person name="Hitti J."/>
            <person name="Wolf Y.I."/>
            <person name="Tatusov R.L."/>
            <person name="Sabathe F."/>
            <person name="Doucette-Stamm L.A."/>
            <person name="Soucaille P."/>
            <person name="Daly M.J."/>
            <person name="Bennett G.N."/>
            <person name="Koonin E.V."/>
            <person name="Smith D.R."/>
        </authorList>
    </citation>
    <scope>NUCLEOTIDE SEQUENCE [LARGE SCALE GENOMIC DNA]</scope>
    <source>
        <strain>ATCC 824 / DSM 792 / JCM 1419 / IAM 19013 / LMG 5710 / NBRC 13948 / NRRL B-527 / VKM B-1787 / 2291 / W</strain>
    </source>
</reference>